<evidence type="ECO:0000255" key="1">
    <source>
        <dbReference type="HAMAP-Rule" id="MF_00383"/>
    </source>
</evidence>
<evidence type="ECO:0000255" key="2">
    <source>
        <dbReference type="PROSITE-ProRule" id="PRU00469"/>
    </source>
</evidence>
<protein>
    <recommendedName>
        <fullName evidence="1">Transcription initiation factor IIB 2</fullName>
        <shortName evidence="1">TFIIB 2</shortName>
    </recommendedName>
</protein>
<reference key="1">
    <citation type="journal article" date="2001" name="Extremophiles">
        <title>Interaction of TIP26 from a hyperthermophilic archaeon with TFB/TBP/DNA ternary complex.</title>
        <authorList>
            <person name="Matsuda T."/>
            <person name="Fujikawa M."/>
            <person name="Haruki M."/>
            <person name="Tang X.F."/>
            <person name="Ezaki S."/>
            <person name="Imanaka T."/>
            <person name="Morikawa M."/>
            <person name="Kanaya S."/>
        </authorList>
    </citation>
    <scope>NUCLEOTIDE SEQUENCE [GENOMIC DNA]</scope>
    <source>
        <strain>ATCC BAA-918 / JCM 12380 / KOD1</strain>
    </source>
</reference>
<reference key="2">
    <citation type="journal article" date="2005" name="Genome Res.">
        <title>Complete genome sequence of the hyperthermophilic archaeon Thermococcus kodakaraensis KOD1 and comparison with Pyrococcus genomes.</title>
        <authorList>
            <person name="Fukui T."/>
            <person name="Atomi H."/>
            <person name="Kanai T."/>
            <person name="Matsumi R."/>
            <person name="Fujiwara S."/>
            <person name="Imanaka T."/>
        </authorList>
    </citation>
    <scope>NUCLEOTIDE SEQUENCE [LARGE SCALE GENOMIC DNA]</scope>
    <source>
        <strain>ATCC BAA-918 / JCM 12380 / KOD1</strain>
    </source>
</reference>
<comment type="function">
    <text evidence="1">Stabilizes TBP binding to an archaeal box-A promoter. Also responsible for recruiting RNA polymerase II to the pre-initiation complex (DNA-TBP-TFIIB).</text>
</comment>
<comment type="similarity">
    <text evidence="1">Belongs to the TFIIB family.</text>
</comment>
<accession>P58109</accession>
<dbReference type="EMBL" id="AB046423">
    <property type="protein sequence ID" value="BAB21262.1"/>
    <property type="molecule type" value="Genomic_DNA"/>
</dbReference>
<dbReference type="EMBL" id="AP006878">
    <property type="protein sequence ID" value="BAD86476.1"/>
    <property type="molecule type" value="Genomic_DNA"/>
</dbReference>
<dbReference type="SMR" id="P58109"/>
<dbReference type="FunCoup" id="P58109">
    <property type="interactions" value="2"/>
</dbReference>
<dbReference type="STRING" id="69014.TK2287"/>
<dbReference type="EnsemblBacteria" id="BAD86476">
    <property type="protein sequence ID" value="BAD86476"/>
    <property type="gene ID" value="TK2287"/>
</dbReference>
<dbReference type="KEGG" id="tko:TK2287"/>
<dbReference type="PATRIC" id="fig|69014.16.peg.2242"/>
<dbReference type="eggNOG" id="arCOG01981">
    <property type="taxonomic scope" value="Archaea"/>
</dbReference>
<dbReference type="HOGENOM" id="CLU_043736_0_1_2"/>
<dbReference type="InParanoid" id="P58109"/>
<dbReference type="PhylomeDB" id="P58109"/>
<dbReference type="Proteomes" id="UP000000536">
    <property type="component" value="Chromosome"/>
</dbReference>
<dbReference type="GO" id="GO:0097550">
    <property type="term" value="C:transcription preinitiation complex"/>
    <property type="evidence" value="ECO:0000318"/>
    <property type="project" value="GO_Central"/>
</dbReference>
<dbReference type="GO" id="GO:0003700">
    <property type="term" value="F:DNA-binding transcription factor activity"/>
    <property type="evidence" value="ECO:0007669"/>
    <property type="project" value="UniProtKB-UniRule"/>
</dbReference>
<dbReference type="GO" id="GO:0017025">
    <property type="term" value="F:TBP-class protein binding"/>
    <property type="evidence" value="ECO:0007669"/>
    <property type="project" value="InterPro"/>
</dbReference>
<dbReference type="GO" id="GO:0008270">
    <property type="term" value="F:zinc ion binding"/>
    <property type="evidence" value="ECO:0007669"/>
    <property type="project" value="UniProtKB-UniRule"/>
</dbReference>
<dbReference type="GO" id="GO:0006352">
    <property type="term" value="P:DNA-templated transcription initiation"/>
    <property type="evidence" value="ECO:0000318"/>
    <property type="project" value="GO_Central"/>
</dbReference>
<dbReference type="GO" id="GO:0070897">
    <property type="term" value="P:transcription preinitiation complex assembly"/>
    <property type="evidence" value="ECO:0007669"/>
    <property type="project" value="InterPro"/>
</dbReference>
<dbReference type="CDD" id="cd20549">
    <property type="entry name" value="CYCLIN_TFIIB_archaea_like_rpt1"/>
    <property type="match status" value="1"/>
</dbReference>
<dbReference type="CDD" id="cd20550">
    <property type="entry name" value="CYCLIN_TFIIB_archaea_like_rpt2"/>
    <property type="match status" value="1"/>
</dbReference>
<dbReference type="FunFam" id="1.10.472.10:FF:000023">
    <property type="entry name" value="Transcription initiation factor IIB"/>
    <property type="match status" value="1"/>
</dbReference>
<dbReference type="FunFam" id="1.10.472.170:FF:000001">
    <property type="entry name" value="Transcription initiation factor IIB"/>
    <property type="match status" value="1"/>
</dbReference>
<dbReference type="Gene3D" id="1.10.472.170">
    <property type="match status" value="1"/>
</dbReference>
<dbReference type="Gene3D" id="1.10.472.10">
    <property type="entry name" value="Cyclin-like"/>
    <property type="match status" value="1"/>
</dbReference>
<dbReference type="HAMAP" id="MF_00383">
    <property type="entry name" value="TF2B_arch"/>
    <property type="match status" value="1"/>
</dbReference>
<dbReference type="InterPro" id="IPR013763">
    <property type="entry name" value="Cyclin-like_dom"/>
</dbReference>
<dbReference type="InterPro" id="IPR036915">
    <property type="entry name" value="Cyclin-like_sf"/>
</dbReference>
<dbReference type="InterPro" id="IPR000812">
    <property type="entry name" value="TFIIB"/>
</dbReference>
<dbReference type="InterPro" id="IPR023484">
    <property type="entry name" value="TFIIB_arc"/>
</dbReference>
<dbReference type="InterPro" id="IPR023486">
    <property type="entry name" value="TFIIB_CS"/>
</dbReference>
<dbReference type="InterPro" id="IPR013150">
    <property type="entry name" value="TFIIB_cyclin"/>
</dbReference>
<dbReference type="InterPro" id="IPR013137">
    <property type="entry name" value="Znf_TFIIB"/>
</dbReference>
<dbReference type="NCBIfam" id="NF001658">
    <property type="entry name" value="PRK00423.1"/>
    <property type="match status" value="1"/>
</dbReference>
<dbReference type="PANTHER" id="PTHR11618:SF13">
    <property type="entry name" value="TRANSCRIPTION INITIATION FACTOR IIB"/>
    <property type="match status" value="1"/>
</dbReference>
<dbReference type="PANTHER" id="PTHR11618">
    <property type="entry name" value="TRANSCRIPTION INITIATION FACTOR IIB-RELATED"/>
    <property type="match status" value="1"/>
</dbReference>
<dbReference type="Pfam" id="PF00382">
    <property type="entry name" value="TFIIB"/>
    <property type="match status" value="2"/>
</dbReference>
<dbReference type="Pfam" id="PF08271">
    <property type="entry name" value="Zn_Ribbon_TF"/>
    <property type="match status" value="1"/>
</dbReference>
<dbReference type="PRINTS" id="PR00685">
    <property type="entry name" value="TIFACTORIIB"/>
</dbReference>
<dbReference type="SMART" id="SM00385">
    <property type="entry name" value="CYCLIN"/>
    <property type="match status" value="2"/>
</dbReference>
<dbReference type="SUPFAM" id="SSF47954">
    <property type="entry name" value="Cyclin-like"/>
    <property type="match status" value="2"/>
</dbReference>
<dbReference type="SUPFAM" id="SSF57783">
    <property type="entry name" value="Zinc beta-ribbon"/>
    <property type="match status" value="1"/>
</dbReference>
<dbReference type="PROSITE" id="PS00782">
    <property type="entry name" value="TFIIB"/>
    <property type="match status" value="2"/>
</dbReference>
<dbReference type="PROSITE" id="PS51134">
    <property type="entry name" value="ZF_TFIIB"/>
    <property type="match status" value="1"/>
</dbReference>
<gene>
    <name evidence="1" type="primary">tfb2</name>
    <name type="synonym">tfb</name>
    <name type="ordered locus">TK2287</name>
</gene>
<keyword id="KW-0479">Metal-binding</keyword>
<keyword id="KW-1185">Reference proteome</keyword>
<keyword id="KW-0677">Repeat</keyword>
<keyword id="KW-0804">Transcription</keyword>
<keyword id="KW-0805">Transcription regulation</keyword>
<keyword id="KW-0862">Zinc</keyword>
<keyword id="KW-0863">Zinc-finger</keyword>
<organism>
    <name type="scientific">Thermococcus kodakarensis (strain ATCC BAA-918 / JCM 12380 / KOD1)</name>
    <name type="common">Pyrococcus kodakaraensis (strain KOD1)</name>
    <dbReference type="NCBI Taxonomy" id="69014"/>
    <lineage>
        <taxon>Archaea</taxon>
        <taxon>Methanobacteriati</taxon>
        <taxon>Methanobacteriota</taxon>
        <taxon>Thermococci</taxon>
        <taxon>Thermococcales</taxon>
        <taxon>Thermococcaceae</taxon>
        <taxon>Thermococcus</taxon>
    </lineage>
</organism>
<feature type="chain" id="PRO_0000119330" description="Transcription initiation factor IIB 2">
    <location>
        <begin position="1"/>
        <end position="306"/>
    </location>
</feature>
<feature type="repeat" description="1">
    <location>
        <begin position="123"/>
        <end position="206"/>
    </location>
</feature>
<feature type="repeat" description="2">
    <location>
        <begin position="217"/>
        <end position="298"/>
    </location>
</feature>
<feature type="zinc finger region" description="TFIIB-type" evidence="2">
    <location>
        <begin position="6"/>
        <end position="37"/>
    </location>
</feature>
<feature type="binding site" evidence="2">
    <location>
        <position position="10"/>
    </location>
    <ligand>
        <name>Zn(2+)</name>
        <dbReference type="ChEBI" id="CHEBI:29105"/>
    </ligand>
</feature>
<feature type="binding site" evidence="2">
    <location>
        <position position="13"/>
    </location>
    <ligand>
        <name>Zn(2+)</name>
        <dbReference type="ChEBI" id="CHEBI:29105"/>
    </ligand>
</feature>
<feature type="binding site" evidence="2">
    <location>
        <position position="29"/>
    </location>
    <ligand>
        <name>Zn(2+)</name>
        <dbReference type="ChEBI" id="CHEBI:29105"/>
    </ligand>
</feature>
<feature type="binding site" evidence="2">
    <location>
        <position position="32"/>
    </location>
    <ligand>
        <name>Zn(2+)</name>
        <dbReference type="ChEBI" id="CHEBI:29105"/>
    </ligand>
</feature>
<proteinExistence type="inferred from homology"/>
<name>TF2B2_THEKO</name>
<sequence>MRGISPKRVCPICGSTEFIYDPRRGEIVCAKCGYVIEENVVDEGPEWRAFEPGQREKRARTGAPMTLMIHDKGLSTDIDWRDKDIHGNQITGMYRNKLRRLRMWQRRMRINDAAERNLAFALSELDRMAAQLRLPRHLKEVAASLYRKAVMKKLIRGRSIEGMVSAALYAACRMEGIPRTLDEIASVSKVSKKEIGRSYRFMARGLGLNLRPTSPIEYVDRFGDALGVSARTKKRAKEILNEAIKRGITSGKGPTGLAAAALYIAALLEGEKKTQREVAEVAHVTEVTVRNRYKELVEKLGINVPI</sequence>